<dbReference type="EMBL" id="GU324075">
    <property type="protein sequence ID" value="ADB95947.1"/>
    <property type="molecule type" value="mRNA"/>
</dbReference>
<dbReference type="ConoServer" id="4050">
    <property type="toxin name" value="Cal22b precursor"/>
</dbReference>
<dbReference type="GO" id="GO:0005576">
    <property type="term" value="C:extracellular region"/>
    <property type="evidence" value="ECO:0007669"/>
    <property type="project" value="UniProtKB-SubCell"/>
</dbReference>
<dbReference type="GO" id="GO:0099106">
    <property type="term" value="F:ion channel regulator activity"/>
    <property type="evidence" value="ECO:0007669"/>
    <property type="project" value="UniProtKB-KW"/>
</dbReference>
<dbReference type="GO" id="GO:0090729">
    <property type="term" value="F:toxin activity"/>
    <property type="evidence" value="ECO:0007669"/>
    <property type="project" value="UniProtKB-KW"/>
</dbReference>
<evidence type="ECO:0000303" key="1">
    <source>
    </source>
</evidence>
<evidence type="ECO:0000305" key="2"/>
<evidence type="ECO:0000305" key="3">
    <source>
    </source>
</evidence>
<accession>D3JWK3</accession>
<comment type="function">
    <text evidence="2">Probable neurotoxin with unknown target. Possibly targets ion channels.</text>
</comment>
<comment type="subcellular location">
    <subcellularLocation>
        <location evidence="3">Secreted</location>
    </subcellularLocation>
</comment>
<comment type="tissue specificity">
    <text evidence="3">Expressed by the venom duct.</text>
</comment>
<comment type="domain">
    <text>The cysteine framework is XXII (C-C-C-C-C-C-C-C).</text>
</comment>
<comment type="PTM">
    <text evidence="2">Contains 4 disulfide bonds.</text>
</comment>
<name>CUMB_CONCL</name>
<protein>
    <recommendedName>
        <fullName evidence="1">Conotoxin Cal22b</fullName>
    </recommendedName>
</protein>
<feature type="propeptide" id="PRO_0000414937" evidence="3">
    <location>
        <begin position="1" status="less than"/>
        <end position="5"/>
    </location>
</feature>
<feature type="peptide" id="PRO_5000666521" description="Conotoxin Cal22b" evidence="3">
    <location>
        <begin position="7"/>
        <end position="53"/>
    </location>
</feature>
<feature type="non-terminal residue">
    <location>
        <position position="1"/>
    </location>
</feature>
<organism>
    <name type="scientific">Californiconus californicus</name>
    <name type="common">California cone</name>
    <name type="synonym">Conus californicus</name>
    <dbReference type="NCBI Taxonomy" id="1736779"/>
    <lineage>
        <taxon>Eukaryota</taxon>
        <taxon>Metazoa</taxon>
        <taxon>Spiralia</taxon>
        <taxon>Lophotrochozoa</taxon>
        <taxon>Mollusca</taxon>
        <taxon>Gastropoda</taxon>
        <taxon>Caenogastropoda</taxon>
        <taxon>Neogastropoda</taxon>
        <taxon>Conoidea</taxon>
        <taxon>Conidae</taxon>
        <taxon>Californiconus</taxon>
    </lineage>
</organism>
<proteinExistence type="evidence at transcript level"/>
<sequence>GRPSARYDAPYCSQEEVRECDDDCSGNPVRDACQCAYDPAGSPACDCYCVEPWRR</sequence>
<keyword id="KW-1015">Disulfide bond</keyword>
<keyword id="KW-0872">Ion channel impairing toxin</keyword>
<keyword id="KW-0528">Neurotoxin</keyword>
<keyword id="KW-0964">Secreted</keyword>
<keyword id="KW-0800">Toxin</keyword>
<reference key="1">
    <citation type="journal article" date="2011" name="Toxicon">
        <title>Diversity of conotoxin types from Conus californicus reflects a diversity of prey types and a novel evolutionary history.</title>
        <authorList>
            <person name="Elliger C.A."/>
            <person name="Richmond T.A."/>
            <person name="Lebaric Z.N."/>
            <person name="Pierce N.T."/>
            <person name="Sweedler J.V."/>
            <person name="Gilly W.F."/>
        </authorList>
    </citation>
    <scope>NUCLEOTIDE SEQUENCE [MRNA]</scope>
    <source>
        <tissue>Venom duct</tissue>
    </source>
</reference>